<evidence type="ECO:0000255" key="1">
    <source>
        <dbReference type="HAMAP-Rule" id="MF_04072"/>
    </source>
</evidence>
<evidence type="ECO:0000305" key="2"/>
<reference key="1">
    <citation type="submission" date="2005-11" db="EMBL/GenBank/DDBJ databases">
        <title>The NIAID influenza genome sequencing project.</title>
        <authorList>
            <person name="Ghedin E."/>
            <person name="Spiro D."/>
            <person name="Miller N."/>
            <person name="Zaborsky J."/>
            <person name="Feldblyum T."/>
            <person name="Subbu V."/>
            <person name="Shumway M."/>
            <person name="Sparenborg J."/>
            <person name="Groveman L."/>
            <person name="Halpin R."/>
            <person name="Sitz J."/>
            <person name="Koo H."/>
            <person name="Salzberg S.L."/>
            <person name="Webster R.G."/>
            <person name="Hoffmann E."/>
            <person name="Krauss S."/>
            <person name="Naeve C."/>
            <person name="Bao Y."/>
            <person name="Bolotov P."/>
            <person name="Dernovoy D."/>
            <person name="Kiryutin B."/>
            <person name="Lipman D.J."/>
            <person name="Tatusova T."/>
        </authorList>
    </citation>
    <scope>NUCLEOTIDE SEQUENCE [GENOMIC RNA]</scope>
</reference>
<name>HEMA_I75A0</name>
<organism>
    <name type="scientific">Influenza A virus (strain A/Beijing/39/1975 H3N2)</name>
    <dbReference type="NCBI Taxonomy" id="383596"/>
    <lineage>
        <taxon>Viruses</taxon>
        <taxon>Riboviria</taxon>
        <taxon>Orthornavirae</taxon>
        <taxon>Negarnaviricota</taxon>
        <taxon>Polyploviricotina</taxon>
        <taxon>Insthoviricetes</taxon>
        <taxon>Articulavirales</taxon>
        <taxon>Orthomyxoviridae</taxon>
        <taxon>Alphainfluenzavirus</taxon>
        <taxon>Alphainfluenzavirus influenzae</taxon>
        <taxon>Influenza A virus</taxon>
    </lineage>
</organism>
<feature type="signal peptide" evidence="1">
    <location>
        <begin position="1"/>
        <end position="16"/>
    </location>
</feature>
<feature type="chain" id="PRO_0000440440" description="Hemagglutinin" evidence="1">
    <location>
        <begin position="17"/>
        <end position="566"/>
    </location>
</feature>
<feature type="chain" id="PRO_5000135669" description="Hemagglutinin HA1 chain">
    <location>
        <begin position="17"/>
        <end position="344"/>
    </location>
</feature>
<feature type="chain" id="PRO_5000135670" description="Hemagglutinin HA2 chain" evidence="1">
    <location>
        <begin position="346"/>
        <end position="566"/>
    </location>
</feature>
<feature type="topological domain" description="Extracellular" evidence="1">
    <location>
        <begin position="17"/>
        <end position="530"/>
    </location>
</feature>
<feature type="transmembrane region" description="Helical" evidence="1">
    <location>
        <begin position="531"/>
        <end position="551"/>
    </location>
</feature>
<feature type="topological domain" description="Cytoplasmic" evidence="1">
    <location>
        <begin position="552"/>
        <end position="566"/>
    </location>
</feature>
<feature type="site" description="Cleavage; by host" evidence="1">
    <location>
        <begin position="345"/>
        <end position="346"/>
    </location>
</feature>
<feature type="lipid moiety-binding region" description="S-palmitoyl cysteine; by host" evidence="1">
    <location>
        <position position="555"/>
    </location>
</feature>
<feature type="lipid moiety-binding region" description="S-palmitoyl cysteine; by host" evidence="1">
    <location>
        <position position="562"/>
    </location>
</feature>
<feature type="lipid moiety-binding region" description="S-palmitoyl cysteine; by host" evidence="1">
    <location>
        <position position="565"/>
    </location>
</feature>
<feature type="glycosylation site" description="N-linked (GlcNAc...) asparagine; by host" evidence="1">
    <location>
        <position position="24"/>
    </location>
</feature>
<feature type="glycosylation site" description="N-linked (GlcNAc...) asparagine; by host" evidence="1">
    <location>
        <position position="38"/>
    </location>
</feature>
<feature type="glycosylation site" description="N-linked (GlcNAc...) asparagine; by host" evidence="1">
    <location>
        <position position="54"/>
    </location>
</feature>
<feature type="glycosylation site" description="N-linked (GlcNAc...) asparagine; by host" evidence="1">
    <location>
        <position position="79"/>
    </location>
</feature>
<feature type="glycosylation site" description="N-linked (GlcNAc...) asparagine; by host" evidence="1">
    <location>
        <position position="142"/>
    </location>
</feature>
<feature type="glycosylation site" description="N-linked (GlcNAc...) asparagine; by host" evidence="1">
    <location>
        <position position="181"/>
    </location>
</feature>
<feature type="glycosylation site" description="N-linked (GlcNAc...) asparagine; by host" evidence="1">
    <location>
        <position position="301"/>
    </location>
</feature>
<feature type="glycosylation site" description="N-linked (GlcNAc...) asparagine; by host" evidence="1">
    <location>
        <position position="499"/>
    </location>
</feature>
<feature type="disulfide bond" description="Interchain (between HA1 and HA2 chains)" evidence="1">
    <location>
        <begin position="30"/>
        <end position="482"/>
    </location>
</feature>
<feature type="disulfide bond" evidence="1">
    <location>
        <begin position="68"/>
        <end position="293"/>
    </location>
</feature>
<feature type="disulfide bond" evidence="1">
    <location>
        <begin position="80"/>
        <end position="92"/>
    </location>
</feature>
<feature type="disulfide bond" evidence="1">
    <location>
        <begin position="113"/>
        <end position="155"/>
    </location>
</feature>
<feature type="disulfide bond" evidence="1">
    <location>
        <begin position="297"/>
        <end position="321"/>
    </location>
</feature>
<feature type="disulfide bond" evidence="1">
    <location>
        <begin position="489"/>
        <end position="493"/>
    </location>
</feature>
<comment type="function">
    <text evidence="1">Binds to sialic acid-containing receptors on the cell surface, bringing about the attachment of the virus particle to the cell. This attachment induces virion internalization either through clathrin-dependent endocytosis or through clathrin- and caveolin-independent pathway. Plays a major role in the determination of host range restriction and virulence. Class I viral fusion protein. Responsible for penetration of the virus into the cell cytoplasm by mediating the fusion of the membrane of the endocytosed virus particle with the endosomal membrane. Low pH in endosomes induces an irreversible conformational change in HA2, releasing the fusion hydrophobic peptide. Several trimers are required to form a competent fusion pore.</text>
</comment>
<comment type="subunit">
    <text evidence="1">Homotrimer of disulfide-linked HA1-HA2.</text>
</comment>
<comment type="subcellular location">
    <subcellularLocation>
        <location evidence="1">Virion membrane</location>
        <topology evidence="1">Single-pass type I membrane protein</topology>
    </subcellularLocation>
    <subcellularLocation>
        <location evidence="1">Host apical cell membrane</location>
        <topology evidence="1">Single-pass type I membrane protein</topology>
    </subcellularLocation>
    <text evidence="1">Targeted to the apical plasma membrane in epithelial polarized cells through a signal present in the transmembrane domain. Associated with glycosphingolipid- and cholesterol-enriched detergent-resistant lipid rafts.</text>
</comment>
<comment type="PTM">
    <text evidence="1">Palmitoylated.</text>
</comment>
<comment type="PTM">
    <text evidence="1">In natural infection, inactive HA is matured into HA1 and HA2 outside the cell by one or more trypsin-like, arginine-specific endoprotease secreted by the bronchial epithelial cells. One identified protease that may be involved in this process is secreted in lungs by club cells.</text>
</comment>
<comment type="miscellaneous">
    <text>Major glycoprotein, comprises over 80% of the envelope proteins present in virus particle.</text>
</comment>
<comment type="miscellaneous">
    <text>The extent of infection into host organism is determined by HA. Influenza viruses bud from the apical surface of polarized epithelial cells (e.g. bronchial epithelial cells) into lumen of lungs and are therefore usually pneumotropic. The reason is that HA is cleaved by tryptase clara which is restricted to lungs. However, HAs of H5 and H7 pantropic avian viruses subtypes can be cleaved by furin and subtilisin-type enzymes, allowing the virus to grow in other organs than lungs.</text>
</comment>
<comment type="miscellaneous">
    <text evidence="2">The influenza A genome consist of 8 RNA segments. Genetic variation of hemagglutinin and/or neuraminidase genes results in the emergence of new influenza strains. The mechanism of variation can be the result of point mutations or the result of genetic reassortment between segments of two different strains.</text>
</comment>
<comment type="similarity">
    <text evidence="1">Belongs to the influenza viruses hemagglutinin family.</text>
</comment>
<protein>
    <recommendedName>
        <fullName evidence="1">Hemagglutinin</fullName>
    </recommendedName>
    <component>
        <recommendedName>
            <fullName evidence="1">Hemagglutinin HA1 chain</fullName>
        </recommendedName>
    </component>
    <component>
        <recommendedName>
            <fullName evidence="1">Hemagglutinin HA2 chain</fullName>
        </recommendedName>
    </component>
</protein>
<gene>
    <name evidence="1" type="primary">HA</name>
</gene>
<proteinExistence type="inferred from homology"/>
<organismHost>
    <name type="scientific">Aves</name>
    <dbReference type="NCBI Taxonomy" id="8782"/>
</organismHost>
<organismHost>
    <name type="scientific">Cetacea</name>
    <name type="common">whales</name>
    <dbReference type="NCBI Taxonomy" id="9721"/>
</organismHost>
<organismHost>
    <name type="scientific">Homo sapiens</name>
    <name type="common">Human</name>
    <dbReference type="NCBI Taxonomy" id="9606"/>
</organismHost>
<organismHost>
    <name type="scientific">Phocidae</name>
    <name type="common">true seals</name>
    <dbReference type="NCBI Taxonomy" id="9709"/>
</organismHost>
<organismHost>
    <name type="scientific">Sus scrofa</name>
    <name type="common">Pig</name>
    <dbReference type="NCBI Taxonomy" id="9823"/>
</organismHost>
<accession>Q30NQ1</accession>
<keyword id="KW-1167">Clathrin- and caveolin-independent endocytosis of virus by host</keyword>
<keyword id="KW-1165">Clathrin-mediated endocytosis of virus by host</keyword>
<keyword id="KW-1015">Disulfide bond</keyword>
<keyword id="KW-1170">Fusion of virus membrane with host endosomal membrane</keyword>
<keyword id="KW-1168">Fusion of virus membrane with host membrane</keyword>
<keyword id="KW-0325">Glycoprotein</keyword>
<keyword id="KW-0348">Hemagglutinin</keyword>
<keyword id="KW-1032">Host cell membrane</keyword>
<keyword id="KW-1043">Host membrane</keyword>
<keyword id="KW-0945">Host-virus interaction</keyword>
<keyword id="KW-0449">Lipoprotein</keyword>
<keyword id="KW-0472">Membrane</keyword>
<keyword id="KW-0564">Palmitate</keyword>
<keyword id="KW-0732">Signal</keyword>
<keyword id="KW-0812">Transmembrane</keyword>
<keyword id="KW-1133">Transmembrane helix</keyword>
<keyword id="KW-1161">Viral attachment to host cell</keyword>
<keyword id="KW-0261">Viral envelope protein</keyword>
<keyword id="KW-1162">Viral penetration into host cytoplasm</keyword>
<keyword id="KW-0946">Virion</keyword>
<keyword id="KW-1164">Virus endocytosis by host</keyword>
<keyword id="KW-1160">Virus entry into host cell</keyword>
<dbReference type="EMBL" id="CY006044">
    <property type="protein sequence ID" value="ABB46392.1"/>
    <property type="molecule type" value="Genomic_RNA"/>
</dbReference>
<dbReference type="SMR" id="Q30NQ1"/>
<dbReference type="GlyCosmos" id="Q30NQ1">
    <property type="glycosylation" value="8 sites, No reported glycans"/>
</dbReference>
<dbReference type="Proteomes" id="UP000000827">
    <property type="component" value="Genome"/>
</dbReference>
<dbReference type="GO" id="GO:0020002">
    <property type="term" value="C:host cell plasma membrane"/>
    <property type="evidence" value="ECO:0007669"/>
    <property type="project" value="UniProtKB-SubCell"/>
</dbReference>
<dbReference type="GO" id="GO:0016020">
    <property type="term" value="C:membrane"/>
    <property type="evidence" value="ECO:0007669"/>
    <property type="project" value="UniProtKB-UniRule"/>
</dbReference>
<dbReference type="GO" id="GO:0019031">
    <property type="term" value="C:viral envelope"/>
    <property type="evidence" value="ECO:0007669"/>
    <property type="project" value="UniProtKB-UniRule"/>
</dbReference>
<dbReference type="GO" id="GO:0055036">
    <property type="term" value="C:virion membrane"/>
    <property type="evidence" value="ECO:0007669"/>
    <property type="project" value="UniProtKB-SubCell"/>
</dbReference>
<dbReference type="GO" id="GO:0046789">
    <property type="term" value="F:host cell surface receptor binding"/>
    <property type="evidence" value="ECO:0007669"/>
    <property type="project" value="UniProtKB-UniRule"/>
</dbReference>
<dbReference type="GO" id="GO:0075512">
    <property type="term" value="P:clathrin-dependent endocytosis of virus by host cell"/>
    <property type="evidence" value="ECO:0007669"/>
    <property type="project" value="UniProtKB-UniRule"/>
</dbReference>
<dbReference type="GO" id="GO:0039654">
    <property type="term" value="P:fusion of virus membrane with host endosome membrane"/>
    <property type="evidence" value="ECO:0007669"/>
    <property type="project" value="UniProtKB-UniRule"/>
</dbReference>
<dbReference type="GO" id="GO:0019064">
    <property type="term" value="P:fusion of virus membrane with host plasma membrane"/>
    <property type="evidence" value="ECO:0007669"/>
    <property type="project" value="InterPro"/>
</dbReference>
<dbReference type="GO" id="GO:0046761">
    <property type="term" value="P:viral budding from plasma membrane"/>
    <property type="evidence" value="ECO:0007669"/>
    <property type="project" value="UniProtKB-UniRule"/>
</dbReference>
<dbReference type="GO" id="GO:0019062">
    <property type="term" value="P:virion attachment to host cell"/>
    <property type="evidence" value="ECO:0007669"/>
    <property type="project" value="UniProtKB-KW"/>
</dbReference>
<dbReference type="FunFam" id="3.90.20.10:FF:000001">
    <property type="entry name" value="Hemagglutinin"/>
    <property type="match status" value="1"/>
</dbReference>
<dbReference type="FunFam" id="3.90.209.20:FF:000001">
    <property type="entry name" value="Hemagglutinin"/>
    <property type="match status" value="1"/>
</dbReference>
<dbReference type="Gene3D" id="3.90.20.10">
    <property type="match status" value="1"/>
</dbReference>
<dbReference type="Gene3D" id="3.90.209.20">
    <property type="match status" value="1"/>
</dbReference>
<dbReference type="HAMAP" id="MF_04072">
    <property type="entry name" value="INFV_HEMA"/>
    <property type="match status" value="1"/>
</dbReference>
<dbReference type="InterPro" id="IPR008980">
    <property type="entry name" value="Capsid_hemagglutn"/>
</dbReference>
<dbReference type="InterPro" id="IPR013828">
    <property type="entry name" value="Hemagglutn_HA1_a/b_dom_sf"/>
</dbReference>
<dbReference type="InterPro" id="IPR000149">
    <property type="entry name" value="Hemagglutn_influenz_A"/>
</dbReference>
<dbReference type="InterPro" id="IPR001364">
    <property type="entry name" value="Hemagglutn_influenz_A/B"/>
</dbReference>
<dbReference type="Pfam" id="PF00509">
    <property type="entry name" value="Hemagglutinin"/>
    <property type="match status" value="1"/>
</dbReference>
<dbReference type="PRINTS" id="PR00330">
    <property type="entry name" value="HEMAGGLUTN1"/>
</dbReference>
<dbReference type="PRINTS" id="PR00329">
    <property type="entry name" value="HEMAGGLUTN12"/>
</dbReference>
<dbReference type="SUPFAM" id="SSF58064">
    <property type="entry name" value="Influenza hemagglutinin (stalk)"/>
    <property type="match status" value="1"/>
</dbReference>
<dbReference type="SUPFAM" id="SSF49818">
    <property type="entry name" value="Viral protein domain"/>
    <property type="match status" value="1"/>
</dbReference>
<sequence length="566" mass="63353">MKTIIALSYIFCLAFAQDLPGNDNSTATLCLGHHAVPNGTLVKTITNDQIEVTNATELVQSSSTGKICDNPHRILDGINCTLIDALLGDPHCDGFQNEKWDLFVERSKAFSNCYPYDVPDYASLRSLVASSGTLEFINEGFNWTGVTQNGGSSACKRGPDNGFFSRLNWLYKSGSTYPVQNVTMPNNDNSDKLYIWGVHHPNTDKEQTDLYVQASGKVTVSTKRSQQTIIPNVGSRPWVRGLSSRVSIYWTIVKPGDILVINSNGNLIAPRGYFKMRTGKSSIMRSDAPIGTCSSECITPNGSIPNDKPFQNVNKITYGACPKYVKQNTLKLATGMRNVPEKQTRGIFGAIAGFIENGWEGMIDGWYGFRHQNSEGTGQAADLKSTQTAIDQINGKLNRVIEKTNEKFHQIEKEFSEVEGRIQDLEKYVEDTKIDLWSYNAELLVALENQHTIDLTDSEMNKLFEKTRRQLRENAEDMGNGCFKIYHKCDNACIGSIRNGTYDHDVYRDEALNNRFQIKGVELKSGYKDWILWISFAISCFLLCVVLLGFIMWACQKGNIRCNICI</sequence>